<accession>B5RM19</accession>
<reference key="1">
    <citation type="journal article" date="2008" name="PLoS Genet.">
        <title>The genome of Borrelia recurrentis, the agent of deadly louse-borne relapsing fever, is a degraded subset of tick-borne Borrelia duttonii.</title>
        <authorList>
            <person name="Lescot M."/>
            <person name="Audic S."/>
            <person name="Robert C."/>
            <person name="Nguyen T.T."/>
            <person name="Blanc G."/>
            <person name="Cutler S.J."/>
            <person name="Wincker P."/>
            <person name="Couloux A."/>
            <person name="Claverie J.-M."/>
            <person name="Raoult D."/>
            <person name="Drancourt M."/>
        </authorList>
    </citation>
    <scope>NUCLEOTIDE SEQUENCE [LARGE SCALE GENOMIC DNA]</scope>
    <source>
        <strain>Ly</strain>
    </source>
</reference>
<name>EBFC_BORDL</name>
<proteinExistence type="inferred from homology"/>
<evidence type="ECO:0000255" key="1">
    <source>
        <dbReference type="HAMAP-Rule" id="MF_00274"/>
    </source>
</evidence>
<sequence>MAVNPLDFLKNMSNFKDNIDNIKKEISQIVVCGRAGSDVVVVEMNGEFVVKKILIKEDFFNDLDNEALEHMIKSAFNDAVFKVKEEIKSKTMGSIPFGI</sequence>
<comment type="function">
    <text evidence="1">Binds to DNA and alters its conformation. May be involved in regulation of gene expression, nucleoid organization and DNA protection.</text>
</comment>
<comment type="subunit">
    <text evidence="1">Homodimer.</text>
</comment>
<comment type="subcellular location">
    <subcellularLocation>
        <location evidence="1">Cytoplasm</location>
        <location evidence="1">Nucleoid</location>
    </subcellularLocation>
</comment>
<comment type="similarity">
    <text evidence="1">Belongs to the YbaB/EbfC family.</text>
</comment>
<gene>
    <name evidence="1" type="primary">ebfC</name>
    <name type="ordered locus">BDU_464</name>
</gene>
<organism>
    <name type="scientific">Borrelia duttonii (strain Ly)</name>
    <dbReference type="NCBI Taxonomy" id="412419"/>
    <lineage>
        <taxon>Bacteria</taxon>
        <taxon>Pseudomonadati</taxon>
        <taxon>Spirochaetota</taxon>
        <taxon>Spirochaetia</taxon>
        <taxon>Spirochaetales</taxon>
        <taxon>Borreliaceae</taxon>
        <taxon>Borrelia</taxon>
    </lineage>
</organism>
<dbReference type="EMBL" id="CP000976">
    <property type="protein sequence ID" value="ACH93405.1"/>
    <property type="molecule type" value="Genomic_DNA"/>
</dbReference>
<dbReference type="RefSeq" id="WP_012538216.1">
    <property type="nucleotide sequence ID" value="NC_011229.1"/>
</dbReference>
<dbReference type="SMR" id="B5RM19"/>
<dbReference type="STRING" id="412419.BDU_464"/>
<dbReference type="KEGG" id="bdu:BDU_464"/>
<dbReference type="eggNOG" id="COG0718">
    <property type="taxonomic scope" value="Bacteria"/>
</dbReference>
<dbReference type="HOGENOM" id="CLU_140930_4_1_12"/>
<dbReference type="OrthoDB" id="350636at2"/>
<dbReference type="Proteomes" id="UP000000611">
    <property type="component" value="Chromosome"/>
</dbReference>
<dbReference type="GO" id="GO:0043590">
    <property type="term" value="C:bacterial nucleoid"/>
    <property type="evidence" value="ECO:0007669"/>
    <property type="project" value="UniProtKB-UniRule"/>
</dbReference>
<dbReference type="GO" id="GO:0005737">
    <property type="term" value="C:cytoplasm"/>
    <property type="evidence" value="ECO:0007669"/>
    <property type="project" value="UniProtKB-UniRule"/>
</dbReference>
<dbReference type="GO" id="GO:0003677">
    <property type="term" value="F:DNA binding"/>
    <property type="evidence" value="ECO:0007669"/>
    <property type="project" value="UniProtKB-UniRule"/>
</dbReference>
<dbReference type="Gene3D" id="3.30.1310.10">
    <property type="entry name" value="Nucleoid-associated protein YbaB-like domain"/>
    <property type="match status" value="1"/>
</dbReference>
<dbReference type="HAMAP" id="MF_00274">
    <property type="entry name" value="DNA_YbaB_EbfC"/>
    <property type="match status" value="1"/>
</dbReference>
<dbReference type="InterPro" id="IPR036894">
    <property type="entry name" value="YbaB-like_sf"/>
</dbReference>
<dbReference type="InterPro" id="IPR004401">
    <property type="entry name" value="YbaB/EbfC"/>
</dbReference>
<dbReference type="NCBIfam" id="TIGR00103">
    <property type="entry name" value="DNA_YbaB_EbfC"/>
    <property type="match status" value="1"/>
</dbReference>
<dbReference type="Pfam" id="PF02575">
    <property type="entry name" value="YbaB_DNA_bd"/>
    <property type="match status" value="1"/>
</dbReference>
<dbReference type="PIRSF" id="PIRSF004555">
    <property type="entry name" value="UCP004555"/>
    <property type="match status" value="1"/>
</dbReference>
<dbReference type="SUPFAM" id="SSF82607">
    <property type="entry name" value="YbaB-like"/>
    <property type="match status" value="1"/>
</dbReference>
<feature type="chain" id="PRO_1000114584" description="Nucleoid-associated protein EbfC">
    <location>
        <begin position="1"/>
        <end position="99"/>
    </location>
</feature>
<protein>
    <recommendedName>
        <fullName evidence="1">Nucleoid-associated protein EbfC</fullName>
    </recommendedName>
</protein>
<keyword id="KW-0963">Cytoplasm</keyword>
<keyword id="KW-0238">DNA-binding</keyword>